<name>RS10_ACIC1</name>
<evidence type="ECO:0000255" key="1">
    <source>
        <dbReference type="HAMAP-Rule" id="MF_00508"/>
    </source>
</evidence>
<evidence type="ECO:0000305" key="2"/>
<accession>A0LRL9</accession>
<organism>
    <name type="scientific">Acidothermus cellulolyticus (strain ATCC 43068 / DSM 8971 / 11B)</name>
    <dbReference type="NCBI Taxonomy" id="351607"/>
    <lineage>
        <taxon>Bacteria</taxon>
        <taxon>Bacillati</taxon>
        <taxon>Actinomycetota</taxon>
        <taxon>Actinomycetes</taxon>
        <taxon>Acidothermales</taxon>
        <taxon>Acidothermaceae</taxon>
        <taxon>Acidothermus</taxon>
    </lineage>
</organism>
<sequence>MAGQKIRIRLKAYDHEVIDSSARKIVETVTRTGARVAGPVPLPTEKNVYCVIRSPHKDKDSREHFEMRTHKRLIDIIDPTPRTVDSLMRLDLPAGVDIEIKL</sequence>
<keyword id="KW-1185">Reference proteome</keyword>
<keyword id="KW-0687">Ribonucleoprotein</keyword>
<keyword id="KW-0689">Ribosomal protein</keyword>
<dbReference type="EMBL" id="CP000481">
    <property type="protein sequence ID" value="ABK52079.1"/>
    <property type="molecule type" value="Genomic_DNA"/>
</dbReference>
<dbReference type="RefSeq" id="WP_011719142.1">
    <property type="nucleotide sequence ID" value="NC_008578.1"/>
</dbReference>
<dbReference type="SMR" id="A0LRL9"/>
<dbReference type="FunCoup" id="A0LRL9">
    <property type="interactions" value="308"/>
</dbReference>
<dbReference type="STRING" id="351607.Acel_0305"/>
<dbReference type="KEGG" id="ace:Acel_0305"/>
<dbReference type="eggNOG" id="COG0051">
    <property type="taxonomic scope" value="Bacteria"/>
</dbReference>
<dbReference type="HOGENOM" id="CLU_122625_1_3_11"/>
<dbReference type="InParanoid" id="A0LRL9"/>
<dbReference type="OrthoDB" id="9804464at2"/>
<dbReference type="Proteomes" id="UP000008221">
    <property type="component" value="Chromosome"/>
</dbReference>
<dbReference type="GO" id="GO:1990904">
    <property type="term" value="C:ribonucleoprotein complex"/>
    <property type="evidence" value="ECO:0007669"/>
    <property type="project" value="UniProtKB-KW"/>
</dbReference>
<dbReference type="GO" id="GO:0005840">
    <property type="term" value="C:ribosome"/>
    <property type="evidence" value="ECO:0007669"/>
    <property type="project" value="UniProtKB-KW"/>
</dbReference>
<dbReference type="GO" id="GO:0003735">
    <property type="term" value="F:structural constituent of ribosome"/>
    <property type="evidence" value="ECO:0007669"/>
    <property type="project" value="InterPro"/>
</dbReference>
<dbReference type="GO" id="GO:0000049">
    <property type="term" value="F:tRNA binding"/>
    <property type="evidence" value="ECO:0007669"/>
    <property type="project" value="UniProtKB-UniRule"/>
</dbReference>
<dbReference type="GO" id="GO:0006412">
    <property type="term" value="P:translation"/>
    <property type="evidence" value="ECO:0007669"/>
    <property type="project" value="UniProtKB-UniRule"/>
</dbReference>
<dbReference type="FunFam" id="3.30.70.600:FF:000001">
    <property type="entry name" value="30S ribosomal protein S10"/>
    <property type="match status" value="1"/>
</dbReference>
<dbReference type="Gene3D" id="3.30.70.600">
    <property type="entry name" value="Ribosomal protein S10 domain"/>
    <property type="match status" value="1"/>
</dbReference>
<dbReference type="HAMAP" id="MF_00508">
    <property type="entry name" value="Ribosomal_uS10"/>
    <property type="match status" value="1"/>
</dbReference>
<dbReference type="InterPro" id="IPR001848">
    <property type="entry name" value="Ribosomal_uS10"/>
</dbReference>
<dbReference type="InterPro" id="IPR018268">
    <property type="entry name" value="Ribosomal_uS10_CS"/>
</dbReference>
<dbReference type="InterPro" id="IPR027486">
    <property type="entry name" value="Ribosomal_uS10_dom"/>
</dbReference>
<dbReference type="InterPro" id="IPR036838">
    <property type="entry name" value="Ribosomal_uS10_dom_sf"/>
</dbReference>
<dbReference type="NCBIfam" id="NF001861">
    <property type="entry name" value="PRK00596.1"/>
    <property type="match status" value="1"/>
</dbReference>
<dbReference type="NCBIfam" id="TIGR01049">
    <property type="entry name" value="rpsJ_bact"/>
    <property type="match status" value="1"/>
</dbReference>
<dbReference type="PANTHER" id="PTHR11700">
    <property type="entry name" value="30S RIBOSOMAL PROTEIN S10 FAMILY MEMBER"/>
    <property type="match status" value="1"/>
</dbReference>
<dbReference type="Pfam" id="PF00338">
    <property type="entry name" value="Ribosomal_S10"/>
    <property type="match status" value="1"/>
</dbReference>
<dbReference type="PRINTS" id="PR00971">
    <property type="entry name" value="RIBOSOMALS10"/>
</dbReference>
<dbReference type="SMART" id="SM01403">
    <property type="entry name" value="Ribosomal_S10"/>
    <property type="match status" value="1"/>
</dbReference>
<dbReference type="SUPFAM" id="SSF54999">
    <property type="entry name" value="Ribosomal protein S10"/>
    <property type="match status" value="1"/>
</dbReference>
<dbReference type="PROSITE" id="PS00361">
    <property type="entry name" value="RIBOSOMAL_S10"/>
    <property type="match status" value="1"/>
</dbReference>
<feature type="chain" id="PRO_1000014977" description="Small ribosomal subunit protein uS10">
    <location>
        <begin position="1"/>
        <end position="102"/>
    </location>
</feature>
<proteinExistence type="inferred from homology"/>
<reference key="1">
    <citation type="journal article" date="2009" name="Genome Res.">
        <title>Complete genome of the cellulolytic thermophile Acidothermus cellulolyticus 11B provides insights into its ecophysiological and evolutionary adaptations.</title>
        <authorList>
            <person name="Barabote R.D."/>
            <person name="Xie G."/>
            <person name="Leu D.H."/>
            <person name="Normand P."/>
            <person name="Necsulea A."/>
            <person name="Daubin V."/>
            <person name="Medigue C."/>
            <person name="Adney W.S."/>
            <person name="Xu X.C."/>
            <person name="Lapidus A."/>
            <person name="Parales R.E."/>
            <person name="Detter C."/>
            <person name="Pujic P."/>
            <person name="Bruce D."/>
            <person name="Lavire C."/>
            <person name="Challacombe J.F."/>
            <person name="Brettin T.S."/>
            <person name="Berry A.M."/>
        </authorList>
    </citation>
    <scope>NUCLEOTIDE SEQUENCE [LARGE SCALE GENOMIC DNA]</scope>
    <source>
        <strain>ATCC 43068 / DSM 8971 / 11B</strain>
    </source>
</reference>
<protein>
    <recommendedName>
        <fullName evidence="1">Small ribosomal subunit protein uS10</fullName>
    </recommendedName>
    <alternativeName>
        <fullName evidence="2">30S ribosomal protein S10</fullName>
    </alternativeName>
</protein>
<gene>
    <name evidence="1" type="primary">rpsJ</name>
    <name type="ordered locus">Acel_0305</name>
</gene>
<comment type="function">
    <text evidence="1">Involved in the binding of tRNA to the ribosomes.</text>
</comment>
<comment type="subunit">
    <text evidence="1">Part of the 30S ribosomal subunit.</text>
</comment>
<comment type="similarity">
    <text evidence="1">Belongs to the universal ribosomal protein uS10 family.</text>
</comment>